<accession>Q54WD7</accession>
<feature type="chain" id="PRO_0000362069" description="Probable serine/threonine-protein kinase DDB_G0279719">
    <location>
        <begin position="1"/>
        <end position="942"/>
    </location>
</feature>
<feature type="domain" description="Protein kinase" evidence="2">
    <location>
        <begin position="4"/>
        <end position="617"/>
    </location>
</feature>
<feature type="region of interest" description="Disordered" evidence="4">
    <location>
        <begin position="109"/>
        <end position="170"/>
    </location>
</feature>
<feature type="region of interest" description="Disordered" evidence="4">
    <location>
        <begin position="247"/>
        <end position="303"/>
    </location>
</feature>
<feature type="region of interest" description="Disordered" evidence="4">
    <location>
        <begin position="352"/>
        <end position="371"/>
    </location>
</feature>
<feature type="region of interest" description="Disordered" evidence="4">
    <location>
        <begin position="408"/>
        <end position="445"/>
    </location>
</feature>
<feature type="region of interest" description="Disordered" evidence="4">
    <location>
        <begin position="642"/>
        <end position="686"/>
    </location>
</feature>
<feature type="coiled-coil region" evidence="1">
    <location>
        <begin position="675"/>
        <end position="703"/>
    </location>
</feature>
<feature type="compositionally biased region" description="Low complexity" evidence="4">
    <location>
        <begin position="258"/>
        <end position="272"/>
    </location>
</feature>
<feature type="compositionally biased region" description="Polar residues" evidence="4">
    <location>
        <begin position="288"/>
        <end position="303"/>
    </location>
</feature>
<feature type="compositionally biased region" description="Low complexity" evidence="4">
    <location>
        <begin position="353"/>
        <end position="367"/>
    </location>
</feature>
<feature type="compositionally biased region" description="Low complexity" evidence="4">
    <location>
        <begin position="410"/>
        <end position="432"/>
    </location>
</feature>
<feature type="active site" description="Proton acceptor" evidence="2 3">
    <location>
        <position position="487"/>
    </location>
</feature>
<feature type="binding site" evidence="2">
    <location>
        <begin position="10"/>
        <end position="18"/>
    </location>
    <ligand>
        <name>ATP</name>
        <dbReference type="ChEBI" id="CHEBI:30616"/>
    </ligand>
</feature>
<feature type="binding site" evidence="2">
    <location>
        <position position="33"/>
    </location>
    <ligand>
        <name>ATP</name>
        <dbReference type="ChEBI" id="CHEBI:30616"/>
    </ligand>
</feature>
<proteinExistence type="evidence at transcript level"/>
<keyword id="KW-0067">ATP-binding</keyword>
<keyword id="KW-0175">Coiled coil</keyword>
<keyword id="KW-0418">Kinase</keyword>
<keyword id="KW-0547">Nucleotide-binding</keyword>
<keyword id="KW-1185">Reference proteome</keyword>
<keyword id="KW-0723">Serine/threonine-protein kinase</keyword>
<keyword id="KW-0808">Transferase</keyword>
<reference key="1">
    <citation type="journal article" date="2005" name="Nature">
        <title>The genome of the social amoeba Dictyostelium discoideum.</title>
        <authorList>
            <person name="Eichinger L."/>
            <person name="Pachebat J.A."/>
            <person name="Gloeckner G."/>
            <person name="Rajandream M.A."/>
            <person name="Sucgang R."/>
            <person name="Berriman M."/>
            <person name="Song J."/>
            <person name="Olsen R."/>
            <person name="Szafranski K."/>
            <person name="Xu Q."/>
            <person name="Tunggal B."/>
            <person name="Kummerfeld S."/>
            <person name="Madera M."/>
            <person name="Konfortov B.A."/>
            <person name="Rivero F."/>
            <person name="Bankier A.T."/>
            <person name="Lehmann R."/>
            <person name="Hamlin N."/>
            <person name="Davies R."/>
            <person name="Gaudet P."/>
            <person name="Fey P."/>
            <person name="Pilcher K."/>
            <person name="Chen G."/>
            <person name="Saunders D."/>
            <person name="Sodergren E.J."/>
            <person name="Davis P."/>
            <person name="Kerhornou A."/>
            <person name="Nie X."/>
            <person name="Hall N."/>
            <person name="Anjard C."/>
            <person name="Hemphill L."/>
            <person name="Bason N."/>
            <person name="Farbrother P."/>
            <person name="Desany B."/>
            <person name="Just E."/>
            <person name="Morio T."/>
            <person name="Rost R."/>
            <person name="Churcher C.M."/>
            <person name="Cooper J."/>
            <person name="Haydock S."/>
            <person name="van Driessche N."/>
            <person name="Cronin A."/>
            <person name="Goodhead I."/>
            <person name="Muzny D.M."/>
            <person name="Mourier T."/>
            <person name="Pain A."/>
            <person name="Lu M."/>
            <person name="Harper D."/>
            <person name="Lindsay R."/>
            <person name="Hauser H."/>
            <person name="James K.D."/>
            <person name="Quiles M."/>
            <person name="Madan Babu M."/>
            <person name="Saito T."/>
            <person name="Buchrieser C."/>
            <person name="Wardroper A."/>
            <person name="Felder M."/>
            <person name="Thangavelu M."/>
            <person name="Johnson D."/>
            <person name="Knights A."/>
            <person name="Loulseged H."/>
            <person name="Mungall K.L."/>
            <person name="Oliver K."/>
            <person name="Price C."/>
            <person name="Quail M.A."/>
            <person name="Urushihara H."/>
            <person name="Hernandez J."/>
            <person name="Rabbinowitsch E."/>
            <person name="Steffen D."/>
            <person name="Sanders M."/>
            <person name="Ma J."/>
            <person name="Kohara Y."/>
            <person name="Sharp S."/>
            <person name="Simmonds M.N."/>
            <person name="Spiegler S."/>
            <person name="Tivey A."/>
            <person name="Sugano S."/>
            <person name="White B."/>
            <person name="Walker D."/>
            <person name="Woodward J.R."/>
            <person name="Winckler T."/>
            <person name="Tanaka Y."/>
            <person name="Shaulsky G."/>
            <person name="Schleicher M."/>
            <person name="Weinstock G.M."/>
            <person name="Rosenthal A."/>
            <person name="Cox E.C."/>
            <person name="Chisholm R.L."/>
            <person name="Gibbs R.A."/>
            <person name="Loomis W.F."/>
            <person name="Platzer M."/>
            <person name="Kay R.R."/>
            <person name="Williams J.G."/>
            <person name="Dear P.H."/>
            <person name="Noegel A.A."/>
            <person name="Barrell B.G."/>
            <person name="Kuspa A."/>
        </authorList>
    </citation>
    <scope>NUCLEOTIDE SEQUENCE [LARGE SCALE GENOMIC DNA]</scope>
    <source>
        <strain>AX4</strain>
    </source>
</reference>
<reference key="2">
    <citation type="journal article" date="2008" name="BMC Genomics">
        <title>Genome-wide transcriptional changes induced by phagocytosis or growth on bacteria in Dictyostelium.</title>
        <authorList>
            <person name="Sillo A."/>
            <person name="Bloomfield G."/>
            <person name="Balest A."/>
            <person name="Balbo A."/>
            <person name="Pergolizzi B."/>
            <person name="Peracino B."/>
            <person name="Skelton J."/>
            <person name="Ivens A."/>
            <person name="Bozzaro S."/>
        </authorList>
    </citation>
    <scope>INDUCTION [LARGE SCALE ANALYSIS]</scope>
</reference>
<name>Y9719_DICDI</name>
<dbReference type="EC" id="2.7.11.1"/>
<dbReference type="EMBL" id="AAFI02000032">
    <property type="protein sequence ID" value="EAL67634.1"/>
    <property type="molecule type" value="Genomic_DNA"/>
</dbReference>
<dbReference type="RefSeq" id="XP_641616.1">
    <property type="nucleotide sequence ID" value="XM_636524.1"/>
</dbReference>
<dbReference type="SMR" id="Q54WD7"/>
<dbReference type="FunCoup" id="Q54WD7">
    <property type="interactions" value="362"/>
</dbReference>
<dbReference type="STRING" id="44689.Q54WD7"/>
<dbReference type="GlyGen" id="Q54WD7">
    <property type="glycosylation" value="2 sites"/>
</dbReference>
<dbReference type="PaxDb" id="44689-DDB0216331"/>
<dbReference type="EnsemblProtists" id="EAL67634">
    <property type="protein sequence ID" value="EAL67634"/>
    <property type="gene ID" value="DDB_G0279719"/>
</dbReference>
<dbReference type="GeneID" id="8622194"/>
<dbReference type="KEGG" id="ddi:DDB_G0279719"/>
<dbReference type="dictyBase" id="DDB_G0279719"/>
<dbReference type="VEuPathDB" id="AmoebaDB:DDB_G0279719"/>
<dbReference type="eggNOG" id="KOG0589">
    <property type="taxonomic scope" value="Eukaryota"/>
</dbReference>
<dbReference type="HOGENOM" id="CLU_311785_0_0_1"/>
<dbReference type="InParanoid" id="Q54WD7"/>
<dbReference type="OMA" id="IEWAEHQ"/>
<dbReference type="PRO" id="PR:Q54WD7"/>
<dbReference type="Proteomes" id="UP000002195">
    <property type="component" value="Chromosome 3"/>
</dbReference>
<dbReference type="GO" id="GO:0016747">
    <property type="term" value="F:acyltransferase activity, transferring groups other than amino-acyl groups"/>
    <property type="evidence" value="ECO:0007669"/>
    <property type="project" value="InterPro"/>
</dbReference>
<dbReference type="GO" id="GO:0005524">
    <property type="term" value="F:ATP binding"/>
    <property type="evidence" value="ECO:0007669"/>
    <property type="project" value="UniProtKB-KW"/>
</dbReference>
<dbReference type="GO" id="GO:0106310">
    <property type="term" value="F:protein serine kinase activity"/>
    <property type="evidence" value="ECO:0007669"/>
    <property type="project" value="RHEA"/>
</dbReference>
<dbReference type="GO" id="GO:0004674">
    <property type="term" value="F:protein serine/threonine kinase activity"/>
    <property type="evidence" value="ECO:0000318"/>
    <property type="project" value="GO_Central"/>
</dbReference>
<dbReference type="CDD" id="cd04301">
    <property type="entry name" value="NAT_SF"/>
    <property type="match status" value="1"/>
</dbReference>
<dbReference type="FunFam" id="1.10.510.10:FF:002730">
    <property type="entry name" value="Probable serine/threonine-protein kinase DDB_G0279719"/>
    <property type="match status" value="1"/>
</dbReference>
<dbReference type="FunFam" id="3.30.200.20:FF:001778">
    <property type="entry name" value="Probable serine/threonine-protein kinase DDB_G0279719"/>
    <property type="match status" value="1"/>
</dbReference>
<dbReference type="FunFam" id="3.40.630.30:FF:000307">
    <property type="entry name" value="Probable serine/threonine-protein kinase DDB_G0279719"/>
    <property type="match status" value="1"/>
</dbReference>
<dbReference type="Gene3D" id="3.40.630.30">
    <property type="match status" value="1"/>
</dbReference>
<dbReference type="Gene3D" id="3.30.200.20">
    <property type="entry name" value="Phosphorylase Kinase, domain 1"/>
    <property type="match status" value="1"/>
</dbReference>
<dbReference type="Gene3D" id="1.10.510.10">
    <property type="entry name" value="Transferase(Phosphotransferase) domain 1"/>
    <property type="match status" value="1"/>
</dbReference>
<dbReference type="InterPro" id="IPR016181">
    <property type="entry name" value="Acyl_CoA_acyltransferase"/>
</dbReference>
<dbReference type="InterPro" id="IPR000182">
    <property type="entry name" value="GNAT_dom"/>
</dbReference>
<dbReference type="InterPro" id="IPR011009">
    <property type="entry name" value="Kinase-like_dom_sf"/>
</dbReference>
<dbReference type="InterPro" id="IPR050660">
    <property type="entry name" value="NEK_Ser/Thr_kinase"/>
</dbReference>
<dbReference type="InterPro" id="IPR000719">
    <property type="entry name" value="Prot_kinase_dom"/>
</dbReference>
<dbReference type="InterPro" id="IPR008271">
    <property type="entry name" value="Ser/Thr_kinase_AS"/>
</dbReference>
<dbReference type="PANTHER" id="PTHR43671">
    <property type="entry name" value="SERINE/THREONINE-PROTEIN KINASE NEK"/>
    <property type="match status" value="1"/>
</dbReference>
<dbReference type="PANTHER" id="PTHR43671:SF13">
    <property type="entry name" value="SERINE_THREONINE-PROTEIN KINASE NEK2"/>
    <property type="match status" value="1"/>
</dbReference>
<dbReference type="Pfam" id="PF00583">
    <property type="entry name" value="Acetyltransf_1"/>
    <property type="match status" value="1"/>
</dbReference>
<dbReference type="Pfam" id="PF00069">
    <property type="entry name" value="Pkinase"/>
    <property type="match status" value="1"/>
</dbReference>
<dbReference type="SMART" id="SM00220">
    <property type="entry name" value="S_TKc"/>
    <property type="match status" value="1"/>
</dbReference>
<dbReference type="SUPFAM" id="SSF55729">
    <property type="entry name" value="Acyl-CoA N-acyltransferases (Nat)"/>
    <property type="match status" value="1"/>
</dbReference>
<dbReference type="SUPFAM" id="SSF56112">
    <property type="entry name" value="Protein kinase-like (PK-like)"/>
    <property type="match status" value="1"/>
</dbReference>
<dbReference type="PROSITE" id="PS50011">
    <property type="entry name" value="PROTEIN_KINASE_DOM"/>
    <property type="match status" value="1"/>
</dbReference>
<dbReference type="PROSITE" id="PS00108">
    <property type="entry name" value="PROTEIN_KINASE_ST"/>
    <property type="match status" value="1"/>
</dbReference>
<protein>
    <recommendedName>
        <fullName>Probable serine/threonine-protein kinase DDB_G0279719</fullName>
        <ecNumber>2.7.11.1</ecNumber>
    </recommendedName>
</protein>
<gene>
    <name type="ORF">DDB_G0279719</name>
</gene>
<organism>
    <name type="scientific">Dictyostelium discoideum</name>
    <name type="common">Social amoeba</name>
    <dbReference type="NCBI Taxonomy" id="44689"/>
    <lineage>
        <taxon>Eukaryota</taxon>
        <taxon>Amoebozoa</taxon>
        <taxon>Evosea</taxon>
        <taxon>Eumycetozoa</taxon>
        <taxon>Dictyostelia</taxon>
        <taxon>Dictyosteliales</taxon>
        <taxon>Dictyosteliaceae</taxon>
        <taxon>Dictyostelium</taxon>
    </lineage>
</organism>
<comment type="catalytic activity">
    <reaction>
        <text>L-seryl-[protein] + ATP = O-phospho-L-seryl-[protein] + ADP + H(+)</text>
        <dbReference type="Rhea" id="RHEA:17989"/>
        <dbReference type="Rhea" id="RHEA-COMP:9863"/>
        <dbReference type="Rhea" id="RHEA-COMP:11604"/>
        <dbReference type="ChEBI" id="CHEBI:15378"/>
        <dbReference type="ChEBI" id="CHEBI:29999"/>
        <dbReference type="ChEBI" id="CHEBI:30616"/>
        <dbReference type="ChEBI" id="CHEBI:83421"/>
        <dbReference type="ChEBI" id="CHEBI:456216"/>
        <dbReference type="EC" id="2.7.11.1"/>
    </reaction>
</comment>
<comment type="catalytic activity">
    <reaction>
        <text>L-threonyl-[protein] + ATP = O-phospho-L-threonyl-[protein] + ADP + H(+)</text>
        <dbReference type="Rhea" id="RHEA:46608"/>
        <dbReference type="Rhea" id="RHEA-COMP:11060"/>
        <dbReference type="Rhea" id="RHEA-COMP:11605"/>
        <dbReference type="ChEBI" id="CHEBI:15378"/>
        <dbReference type="ChEBI" id="CHEBI:30013"/>
        <dbReference type="ChEBI" id="CHEBI:30616"/>
        <dbReference type="ChEBI" id="CHEBI:61977"/>
        <dbReference type="ChEBI" id="CHEBI:456216"/>
        <dbReference type="EC" id="2.7.11.1"/>
    </reaction>
</comment>
<comment type="induction">
    <text evidence="5">Down-regulated by phagocytic stimuli.</text>
</comment>
<comment type="similarity">
    <text evidence="2">Belongs to the protein kinase superfamily. Ser/Thr protein kinase family.</text>
</comment>
<sequence>MNKYEVVKLIGVGGEAKALLVKRINSDKLYVMKQRMFFLLEEANEGLCEAMSLAKIQSPYIVRFEEVFLDNNSNMFSLCIVMEYCEGGDLMDNLFKRISDSFLKNSGLNNNQNNNNNNNNNLNSIVNNNILNNNKNSKQSTTNTNSSGSNSSIASNTTNNNNNNNNINNNNNLKAYENFFSKYVPSETLKGVNQLVEPNCNKDNNKPIEITTTDSPRIIINDNESTNNLNSQSDQILQFSISSESSSFSNNDLINSPNSNDSNLHQSSSNSSICGDYSSPPNLEKISSPGTSTPYQKGSNGNTVNIRCSDIVVEAVSPIKTESIGCQIRSTTSPCTSGPTSPQMIPLNIVEQPPQSTSTSKTDSSPTGADVKKTKMTWWKTYKSSKKDKKQTICSNACESFSNSTFFNDPSSHSQPQHQQLHSSPQQLPQSPRLKPNIESSLNINGNNNNNNCSTLLKLPRKLFYTWIYQICLGVQSIHKNHLVHLDLKSENIFLSESQKIKIGDFGLAKKYENSMSGVAGTYYYLSPEILLNKNYSRPADIFSLGCIFYEMYTLNLLPLTKRSFGQELIEGKFDRKAFKQEFDDSDEPIADLILDMLNLDQNLRPTIDLILQNKLFERISDINSSFNNLLNIVNNTGSSITNSKSNSSNNLNNSNSNNDIINNNNNNNSSNNINNNNIVNLNNSYNNKQDKCEQRNKSLNQNGFLSTSSMGSISSSFNEHEFVRRQLEKNDLDAAADVLCEAFKEEPRFQFVSGATSDNLETKNKSIELGQTIRKSFFTMCVRLMFDNKFMLWGCFDYENKLIAVACWSTPGKSGAPPMTQLIVKILSMLPKFGFRTMKRIGKIMSNIDKAMKNHDSKLDVYYLPYIGVSKEYRDLGVGQYLLKPVIEWAEHQRKTVKAVVFSQKQINFFSKLGLSVGHTEKITNLKGINSIYVMSKNSQY</sequence>
<evidence type="ECO:0000255" key="1"/>
<evidence type="ECO:0000255" key="2">
    <source>
        <dbReference type="PROSITE-ProRule" id="PRU00159"/>
    </source>
</evidence>
<evidence type="ECO:0000255" key="3">
    <source>
        <dbReference type="PROSITE-ProRule" id="PRU10027"/>
    </source>
</evidence>
<evidence type="ECO:0000256" key="4">
    <source>
        <dbReference type="SAM" id="MobiDB-lite"/>
    </source>
</evidence>
<evidence type="ECO:0000269" key="5">
    <source>
    </source>
</evidence>